<organism>
    <name type="scientific">Bluetongue virus 10 (isolate USA)</name>
    <name type="common">BTV 10</name>
    <dbReference type="NCBI Taxonomy" id="10900"/>
    <lineage>
        <taxon>Viruses</taxon>
        <taxon>Riboviria</taxon>
        <taxon>Orthornavirae</taxon>
        <taxon>Duplornaviricota</taxon>
        <taxon>Resentoviricetes</taxon>
        <taxon>Reovirales</taxon>
        <taxon>Sedoreoviridae</taxon>
        <taxon>Orbivirus</taxon>
        <taxon>Bluetongue virus</taxon>
    </lineage>
</organism>
<comment type="function">
    <text>The VP3 protein is one of the five proteins (with VP1, VP4, VP6 and VP7) which form the inner capsid of the virus.</text>
</comment>
<comment type="subcellular location">
    <subcellularLocation>
        <location evidence="1">Virion</location>
    </subcellularLocation>
</comment>
<comment type="similarity">
    <text evidence="1">Belongs to the orbivirus VP3 family.</text>
</comment>
<proteinExistence type="inferred from homology"/>
<name>VP3_BTV10</name>
<accession>P12435</accession>
<dbReference type="EMBL" id="M22096">
    <property type="protein sequence ID" value="AAA42832.1"/>
    <property type="molecule type" value="Genomic_RNA"/>
</dbReference>
<dbReference type="PIR" id="S07419">
    <property type="entry name" value="S07419"/>
</dbReference>
<dbReference type="RefSeq" id="YP_052959.1">
    <property type="nucleotide sequence ID" value="NC_006014.1"/>
</dbReference>
<dbReference type="SMR" id="P12435"/>
<dbReference type="KEGG" id="vg:2943153"/>
<dbReference type="Proteomes" id="UP000007662">
    <property type="component" value="Genome"/>
</dbReference>
<dbReference type="GO" id="GO:0044423">
    <property type="term" value="C:virion component"/>
    <property type="evidence" value="ECO:0007669"/>
    <property type="project" value="UniProtKB-KW"/>
</dbReference>
<dbReference type="GO" id="GO:0005198">
    <property type="term" value="F:structural molecule activity"/>
    <property type="evidence" value="ECO:0007669"/>
    <property type="project" value="InterPro"/>
</dbReference>
<dbReference type="InterPro" id="IPR002614">
    <property type="entry name" value="Inner_layer_core_VP3_Orbivir"/>
</dbReference>
<dbReference type="InterPro" id="IPR016029">
    <property type="entry name" value="Inner_layer_core_VP3_Reovir"/>
</dbReference>
<dbReference type="Pfam" id="PF01700">
    <property type="entry name" value="Orbi_VP3"/>
    <property type="match status" value="1"/>
</dbReference>
<dbReference type="SUPFAM" id="SSF56831">
    <property type="entry name" value="Reovirus inner layer core protein p3"/>
    <property type="match status" value="1"/>
</dbReference>
<sequence>MAAQNEQRPERIKTTPYLEGDVLSSDSGPLLSVFALQEIMQKVRQVQADYMTATREVDFTVPDVQKILDDIKTLAAEQVYKIVKVPSISFRHIVMQSRDRVLRVDTYYEEMSQVGDVITEDEPEKFYSTIIKKVRFIRGKGSFILHDIPTRDHRGMEVAEPEVLGVEFKNVLPVLTAEHRAMIQNALDGSIIENGNVATRDVDVFIGACSEPIYRIYNRLQGYIEAVQLQELRNSIGWLERLGQRKRITYSQEVLTDFRRQDTIWVLALQLPVNPQVVWDVPRSSIANLIMNIATCLPTGEYIAPNPRISSITLTQRITTTGPFAILTGSTPTAQQLNDVRKIYLALMFPGQIVLDLKIDPGERMDPAVRMVAGVVGHLLFTAGGRFTNLTQNMARQLDIALNDYLLYMYNTRVQVNYGPTGEPLDFQIGRNQYDCNVFRADFATGTGYNGWATIDVEYRDPAPYVHAQRYIRYCGIDSRELINPTTYGIGMTYHCYNEMLRMLVAAGRDSEAAYFRSMLPFHMVRFARINQIINEDLHSVFSLPDDMFNALLPDLIAGAHQNADPVVLDVSWISLWFAFNRSFEPTHRNEMLEIAPLIESVYASELSVMKVDMRHLSLMQRRFPDVLIQARPSHFWKAVLNDSPEAVKAVMNLSHSHNFINIRDMMRWVLLPSLQPSLKLVLEEEAWAAANDFEDLMLTDQVYMHRDMLPEPRLDDIERFRQEGFYYTNMLEAPPEIDRVVQYTYEIARLQANMGQFRAALRRIMDDDDWVRFGGVLRTVRVKFFDARPPDDILQGLPFSYDTNEKGGLSYATIKYATETTIFYLIYNVEFSNTPDSLVLINPTYTMTKVFINKRIVERVRVGQILAVLNRRFVAYKGKMRIMDITQSLKMGTKLAAPTV</sequence>
<keyword id="KW-1185">Reference proteome</keyword>
<keyword id="KW-0946">Virion</keyword>
<organismHost>
    <name type="scientific">Antilocapra americana</name>
    <name type="common">Pronghorn</name>
    <dbReference type="NCBI Taxonomy" id="9891"/>
</organismHost>
<organismHost>
    <name type="scientific">Bos taurus</name>
    <name type="common">Bovine</name>
    <dbReference type="NCBI Taxonomy" id="9913"/>
</organismHost>
<organismHost>
    <name type="scientific">Capra hircus</name>
    <name type="common">Goat</name>
    <dbReference type="NCBI Taxonomy" id="9925"/>
</organismHost>
<organismHost>
    <name type="scientific">Culicoides variipennis</name>
    <name type="common">Biting midge</name>
    <dbReference type="NCBI Taxonomy" id="46212"/>
</organismHost>
<organismHost>
    <name type="scientific">Ovis aries</name>
    <name type="common">Sheep</name>
    <dbReference type="NCBI Taxonomy" id="9940"/>
</organismHost>
<feature type="chain" id="PRO_0000222695" description="Core protein VP3">
    <location>
        <begin position="1"/>
        <end position="901"/>
    </location>
</feature>
<gene>
    <name type="primary">Segment-3</name>
    <name type="synonym">L3</name>
</gene>
<evidence type="ECO:0000305" key="1"/>
<reference key="1">
    <citation type="journal article" date="1985" name="Virus Res.">
        <title>The complete sequence of bluetongue virus serotype 10 segment 3 and its predicted VP3 polypeptide compared with those of BTV serotype 17.</title>
        <authorList>
            <person name="Ghiasi H."/>
            <person name="Purdy M.A."/>
            <person name="Roy P."/>
        </authorList>
    </citation>
    <scope>NUCLEOTIDE SEQUENCE [GENOMIC RNA]</scope>
</reference>
<protein>
    <recommendedName>
        <fullName>Core protein VP3</fullName>
    </recommendedName>
    <alternativeName>
        <fullName>Major inner capsid protein</fullName>
    </alternativeName>
</protein>